<feature type="chain" id="PRO_0000195549" description="ATP synthase protein 8">
    <location>
        <begin position="1"/>
        <end position="72"/>
    </location>
</feature>
<feature type="transmembrane region" description="Helical" evidence="2">
    <location>
        <begin position="16"/>
        <end position="36"/>
    </location>
</feature>
<comment type="function">
    <text evidence="1">Mitochondrial membrane ATP synthase (F(1)F(0) ATP synthase or Complex V) produces ATP from ADP in the presence of a proton gradient across the membrane which is generated by electron transport complexes of the respiratory chain. F-type ATPases consist of two structural domains, F(1) - containing the extramembraneous catalytic core and F(0) - containing the membrane proton channel, linked together by a central stalk and a peripheral stalk. During catalysis, ATP synthesis in the catalytic domain of F(1) is coupled via a rotary mechanism of the central stalk subunits to proton translocation. Part of the complex F(0) domain. Minor subunit located with subunit a in the membrane (By similarity).</text>
</comment>
<comment type="subunit">
    <text evidence="1">F-type ATPases have 2 components, CF(1) - the catalytic core - and CF(0) - the membrane proton channel.</text>
</comment>
<comment type="subcellular location">
    <subcellularLocation>
        <location>Mitochondrion membrane</location>
        <topology>Single-pass membrane protein</topology>
    </subcellularLocation>
</comment>
<comment type="similarity">
    <text evidence="3">Belongs to the ATPase protein 8 family.</text>
</comment>
<proteinExistence type="inferred from homology"/>
<evidence type="ECO:0000250" key="1"/>
<evidence type="ECO:0000255" key="2"/>
<evidence type="ECO:0000305" key="3"/>
<organism>
    <name type="scientific">Metridium senile</name>
    <name type="common">Brown sea anemone</name>
    <name type="synonym">Frilled sea anemone</name>
    <dbReference type="NCBI Taxonomy" id="6116"/>
    <lineage>
        <taxon>Eukaryota</taxon>
        <taxon>Metazoa</taxon>
        <taxon>Cnidaria</taxon>
        <taxon>Anthozoa</taxon>
        <taxon>Hexacorallia</taxon>
        <taxon>Actiniaria</taxon>
        <taxon>Nynantheae</taxon>
        <taxon>Metridiidae</taxon>
        <taxon>Metridium</taxon>
    </lineage>
</organism>
<sequence length="72" mass="8133">MMPQLETATYLTQYRWTLIALFLLFSFLVVSVLPAVKTNFLIRRSIGAGWTGAPKTSDLNKGPASLWSWDKI</sequence>
<accession>O47493</accession>
<name>ATP8_METSE</name>
<reference key="1">
    <citation type="submission" date="1997-04" db="EMBL/GenBank/DDBJ databases">
        <authorList>
            <person name="Beagley C.T."/>
            <person name="Okimoto R."/>
            <person name="Wolstenholme D.R."/>
        </authorList>
    </citation>
    <scope>NUCLEOTIDE SEQUENCE [GENOMIC DNA]</scope>
    <source>
        <strain>White morph</strain>
    </source>
</reference>
<geneLocation type="mitochondrion"/>
<keyword id="KW-0066">ATP synthesis</keyword>
<keyword id="KW-0138">CF(0)</keyword>
<keyword id="KW-0375">Hydrogen ion transport</keyword>
<keyword id="KW-0406">Ion transport</keyword>
<keyword id="KW-0472">Membrane</keyword>
<keyword id="KW-0496">Mitochondrion</keyword>
<keyword id="KW-0812">Transmembrane</keyword>
<keyword id="KW-1133">Transmembrane helix</keyword>
<keyword id="KW-0813">Transport</keyword>
<dbReference type="EMBL" id="AF000023">
    <property type="protein sequence ID" value="AAC04633.1"/>
    <property type="molecule type" value="Genomic_DNA"/>
</dbReference>
<dbReference type="PIR" id="T11887">
    <property type="entry name" value="T11887"/>
</dbReference>
<dbReference type="RefSeq" id="NP_009256.2">
    <property type="nucleotide sequence ID" value="NC_000933.1"/>
</dbReference>
<dbReference type="SMR" id="O47493"/>
<dbReference type="GeneID" id="808771"/>
<dbReference type="CTD" id="4509"/>
<dbReference type="GO" id="GO:0031966">
    <property type="term" value="C:mitochondrial membrane"/>
    <property type="evidence" value="ECO:0007669"/>
    <property type="project" value="UniProtKB-SubCell"/>
</dbReference>
<dbReference type="GO" id="GO:0045259">
    <property type="term" value="C:proton-transporting ATP synthase complex"/>
    <property type="evidence" value="ECO:0007669"/>
    <property type="project" value="UniProtKB-KW"/>
</dbReference>
<dbReference type="GO" id="GO:0006754">
    <property type="term" value="P:ATP biosynthetic process"/>
    <property type="evidence" value="ECO:0007669"/>
    <property type="project" value="UniProtKB-KW"/>
</dbReference>
<dbReference type="GO" id="GO:1902600">
    <property type="term" value="P:proton transmembrane transport"/>
    <property type="evidence" value="ECO:0007669"/>
    <property type="project" value="UniProtKB-KW"/>
</dbReference>
<dbReference type="InterPro" id="IPR003319">
    <property type="entry name" value="YMF19-like_N"/>
</dbReference>
<dbReference type="Pfam" id="PF02326">
    <property type="entry name" value="YMF19"/>
    <property type="match status" value="1"/>
</dbReference>
<protein>
    <recommendedName>
        <fullName>ATP synthase protein 8</fullName>
    </recommendedName>
    <alternativeName>
        <fullName>A6L</fullName>
    </alternativeName>
    <alternativeName>
        <fullName>F-ATPase subunit 8</fullName>
    </alternativeName>
</protein>
<gene>
    <name type="primary">MTATP8</name>
    <name type="synonym">ATP8</name>
    <name type="synonym">ATPASE8</name>
</gene>